<name>ACPT_SALTI</name>
<sequence length="192" mass="20871">MYQIVLGKVSTLSAGQLPDALIAQAPQGVRRASWLAGRVLLSRALSPLPEMVYGEQGKPAFSAGTPLWFNLSHSGDTIALLLSDEGEVGCDIEVIRPRDNWRSLANAVFSLGEHAEMEAERPERQLAAFWRIWTRKEAIVKQRGGSAWQIVSVDSTLPSALSVSQCQLDTLSLAVCTPTPFTLTPQTITKAL</sequence>
<organism>
    <name type="scientific">Salmonella typhi</name>
    <dbReference type="NCBI Taxonomy" id="90370"/>
    <lineage>
        <taxon>Bacteria</taxon>
        <taxon>Pseudomonadati</taxon>
        <taxon>Pseudomonadota</taxon>
        <taxon>Gammaproteobacteria</taxon>
        <taxon>Enterobacterales</taxon>
        <taxon>Enterobacteriaceae</taxon>
        <taxon>Salmonella</taxon>
    </lineage>
</organism>
<reference key="1">
    <citation type="journal article" date="2001" name="Nature">
        <title>Complete genome sequence of a multiple drug resistant Salmonella enterica serovar Typhi CT18.</title>
        <authorList>
            <person name="Parkhill J."/>
            <person name="Dougan G."/>
            <person name="James K.D."/>
            <person name="Thomson N.R."/>
            <person name="Pickard D."/>
            <person name="Wain J."/>
            <person name="Churcher C.M."/>
            <person name="Mungall K.L."/>
            <person name="Bentley S.D."/>
            <person name="Holden M.T.G."/>
            <person name="Sebaihia M."/>
            <person name="Baker S."/>
            <person name="Basham D."/>
            <person name="Brooks K."/>
            <person name="Chillingworth T."/>
            <person name="Connerton P."/>
            <person name="Cronin A."/>
            <person name="Davis P."/>
            <person name="Davies R.M."/>
            <person name="Dowd L."/>
            <person name="White N."/>
            <person name="Farrar J."/>
            <person name="Feltwell T."/>
            <person name="Hamlin N."/>
            <person name="Haque A."/>
            <person name="Hien T.T."/>
            <person name="Holroyd S."/>
            <person name="Jagels K."/>
            <person name="Krogh A."/>
            <person name="Larsen T.S."/>
            <person name="Leather S."/>
            <person name="Moule S."/>
            <person name="O'Gaora P."/>
            <person name="Parry C."/>
            <person name="Quail M.A."/>
            <person name="Rutherford K.M."/>
            <person name="Simmonds M."/>
            <person name="Skelton J."/>
            <person name="Stevens K."/>
            <person name="Whitehead S."/>
            <person name="Barrell B.G."/>
        </authorList>
    </citation>
    <scope>NUCLEOTIDE SEQUENCE [LARGE SCALE GENOMIC DNA]</scope>
    <source>
        <strain>CT18</strain>
    </source>
</reference>
<reference key="2">
    <citation type="journal article" date="2003" name="J. Bacteriol.">
        <title>Comparative genomics of Salmonella enterica serovar Typhi strains Ty2 and CT18.</title>
        <authorList>
            <person name="Deng W."/>
            <person name="Liou S.-R."/>
            <person name="Plunkett G. III"/>
            <person name="Mayhew G.F."/>
            <person name="Rose D.J."/>
            <person name="Burland V."/>
            <person name="Kodoyianni V."/>
            <person name="Schwartz D.C."/>
            <person name="Blattner F.R."/>
        </authorList>
    </citation>
    <scope>NUCLEOTIDE SEQUENCE [LARGE SCALE GENOMIC DNA]</scope>
    <source>
        <strain>ATCC 700931 / Ty2</strain>
    </source>
</reference>
<accession>Q8Z259</accession>
<proteinExistence type="inferred from homology"/>
<gene>
    <name type="primary">acpT</name>
    <name type="ordered locus">STY4228</name>
    <name type="ordered locus">t3939</name>
</gene>
<comment type="function">
    <text evidence="1">May be involved in an alternative pathway for phosphopantetheinyl transfer and holo-ACP synthesis. The native apo-protein substrate is unknown.</text>
</comment>
<comment type="catalytic activity">
    <reaction evidence="1">
        <text>apo-[ACP] + CoA = holo-[ACP] + adenosine 3',5'-bisphosphate + H(+)</text>
        <dbReference type="Rhea" id="RHEA:12068"/>
        <dbReference type="Rhea" id="RHEA-COMP:9685"/>
        <dbReference type="Rhea" id="RHEA-COMP:9690"/>
        <dbReference type="ChEBI" id="CHEBI:15378"/>
        <dbReference type="ChEBI" id="CHEBI:29999"/>
        <dbReference type="ChEBI" id="CHEBI:57287"/>
        <dbReference type="ChEBI" id="CHEBI:58343"/>
        <dbReference type="ChEBI" id="CHEBI:64479"/>
        <dbReference type="EC" id="2.7.8.7"/>
    </reaction>
</comment>
<comment type="similarity">
    <text evidence="2">Belongs to the P-Pant transferase superfamily. Gsp/Sfp/HetI/AcpT family.</text>
</comment>
<protein>
    <recommendedName>
        <fullName>4'-phosphopantetheinyl transferase AcpT</fullName>
        <ecNumber evidence="1">2.7.8.7</ecNumber>
    </recommendedName>
</protein>
<feature type="chain" id="PRO_0000206083" description="4'-phosphopantetheinyl transferase AcpT">
    <location>
        <begin position="1"/>
        <end position="192"/>
    </location>
</feature>
<dbReference type="EC" id="2.7.8.7" evidence="1"/>
<dbReference type="EMBL" id="AL513382">
    <property type="protein sequence ID" value="CAD08047.1"/>
    <property type="molecule type" value="Genomic_DNA"/>
</dbReference>
<dbReference type="EMBL" id="AE014613">
    <property type="protein sequence ID" value="AAO71410.1"/>
    <property type="molecule type" value="Genomic_DNA"/>
</dbReference>
<dbReference type="RefSeq" id="NP_458338.1">
    <property type="nucleotide sequence ID" value="NC_003198.1"/>
</dbReference>
<dbReference type="RefSeq" id="WP_000284366.1">
    <property type="nucleotide sequence ID" value="NZ_WSUR01000001.1"/>
</dbReference>
<dbReference type="SMR" id="Q8Z259"/>
<dbReference type="STRING" id="220341.gene:17588060"/>
<dbReference type="KEGG" id="stt:t3939"/>
<dbReference type="KEGG" id="sty:STY4228"/>
<dbReference type="PATRIC" id="fig|220341.7.peg.4318"/>
<dbReference type="eggNOG" id="COG2091">
    <property type="taxonomic scope" value="Bacteria"/>
</dbReference>
<dbReference type="HOGENOM" id="CLU_119926_0_0_6"/>
<dbReference type="OMA" id="WQIVSID"/>
<dbReference type="OrthoDB" id="9808281at2"/>
<dbReference type="Proteomes" id="UP000000541">
    <property type="component" value="Chromosome"/>
</dbReference>
<dbReference type="Proteomes" id="UP000002670">
    <property type="component" value="Chromosome"/>
</dbReference>
<dbReference type="GO" id="GO:0005829">
    <property type="term" value="C:cytosol"/>
    <property type="evidence" value="ECO:0007669"/>
    <property type="project" value="TreeGrafter"/>
</dbReference>
<dbReference type="GO" id="GO:0008897">
    <property type="term" value="F:holo-[acyl-carrier-protein] synthase activity"/>
    <property type="evidence" value="ECO:0007669"/>
    <property type="project" value="UniProtKB-EC"/>
</dbReference>
<dbReference type="GO" id="GO:0000287">
    <property type="term" value="F:magnesium ion binding"/>
    <property type="evidence" value="ECO:0007669"/>
    <property type="project" value="InterPro"/>
</dbReference>
<dbReference type="GO" id="GO:0019878">
    <property type="term" value="P:lysine biosynthetic process via aminoadipic acid"/>
    <property type="evidence" value="ECO:0007669"/>
    <property type="project" value="TreeGrafter"/>
</dbReference>
<dbReference type="FunFam" id="3.90.470.20:FF:000004">
    <property type="entry name" value="Holo-(Acyl carrier protein) synthase 2"/>
    <property type="match status" value="1"/>
</dbReference>
<dbReference type="Gene3D" id="3.90.470.20">
    <property type="entry name" value="4'-phosphopantetheinyl transferase domain"/>
    <property type="match status" value="1"/>
</dbReference>
<dbReference type="InterPro" id="IPR008278">
    <property type="entry name" value="4-PPantetheinyl_Trfase_dom"/>
</dbReference>
<dbReference type="InterPro" id="IPR037143">
    <property type="entry name" value="4-PPantetheinyl_Trfase_dom_sf"/>
</dbReference>
<dbReference type="InterPro" id="IPR050559">
    <property type="entry name" value="P-Pant_transferase_sf"/>
</dbReference>
<dbReference type="NCBIfam" id="NF007676">
    <property type="entry name" value="PRK10351.1"/>
    <property type="match status" value="1"/>
</dbReference>
<dbReference type="PANTHER" id="PTHR12215:SF10">
    <property type="entry name" value="L-AMINOADIPATE-SEMIALDEHYDE DEHYDROGENASE-PHOSPHOPANTETHEINYL TRANSFERASE"/>
    <property type="match status" value="1"/>
</dbReference>
<dbReference type="PANTHER" id="PTHR12215">
    <property type="entry name" value="PHOSPHOPANTETHEINE TRANSFERASE"/>
    <property type="match status" value="1"/>
</dbReference>
<dbReference type="Pfam" id="PF01648">
    <property type="entry name" value="ACPS"/>
    <property type="match status" value="1"/>
</dbReference>
<dbReference type="SUPFAM" id="SSF56214">
    <property type="entry name" value="4'-phosphopantetheinyl transferase"/>
    <property type="match status" value="2"/>
</dbReference>
<evidence type="ECO:0000250" key="1">
    <source>
        <dbReference type="UniProtKB" id="P37623"/>
    </source>
</evidence>
<evidence type="ECO:0000305" key="2"/>
<keyword id="KW-0808">Transferase</keyword>